<gene>
    <name type="primary">CLUAP1</name>
    <name type="ORF">QtsA-16846</name>
</gene>
<evidence type="ECO:0000250" key="1">
    <source>
        <dbReference type="UniProtKB" id="Q8R3P7"/>
    </source>
</evidence>
<evidence type="ECO:0000250" key="2">
    <source>
        <dbReference type="UniProtKB" id="Q96AJ1"/>
    </source>
</evidence>
<evidence type="ECO:0000255" key="3"/>
<evidence type="ECO:0000256" key="4">
    <source>
        <dbReference type="SAM" id="MobiDB-lite"/>
    </source>
</evidence>
<evidence type="ECO:0000305" key="5"/>
<proteinExistence type="evidence at transcript level"/>
<protein>
    <recommendedName>
        <fullName>Clusterin-associated protein 1</fullName>
    </recommendedName>
</protein>
<name>CLUA1_MACFA</name>
<organism>
    <name type="scientific">Macaca fascicularis</name>
    <name type="common">Crab-eating macaque</name>
    <name type="synonym">Cynomolgus monkey</name>
    <dbReference type="NCBI Taxonomy" id="9541"/>
    <lineage>
        <taxon>Eukaryota</taxon>
        <taxon>Metazoa</taxon>
        <taxon>Chordata</taxon>
        <taxon>Craniata</taxon>
        <taxon>Vertebrata</taxon>
        <taxon>Euteleostomi</taxon>
        <taxon>Mammalia</taxon>
        <taxon>Eutheria</taxon>
        <taxon>Euarchontoglires</taxon>
        <taxon>Primates</taxon>
        <taxon>Haplorrhini</taxon>
        <taxon>Catarrhini</taxon>
        <taxon>Cercopithecidae</taxon>
        <taxon>Cercopithecinae</taxon>
        <taxon>Macaca</taxon>
    </lineage>
</organism>
<feature type="chain" id="PRO_0000239452" description="Clusterin-associated protein 1">
    <location>
        <begin position="1"/>
        <end position="414"/>
    </location>
</feature>
<feature type="region of interest" description="Disordered" evidence="4">
    <location>
        <begin position="305"/>
        <end position="414"/>
    </location>
</feature>
<feature type="coiled-coil region" evidence="3">
    <location>
        <begin position="198"/>
        <end position="291"/>
    </location>
</feature>
<feature type="compositionally biased region" description="Acidic residues" evidence="4">
    <location>
        <begin position="312"/>
        <end position="328"/>
    </location>
</feature>
<feature type="compositionally biased region" description="Acidic residues" evidence="4">
    <location>
        <begin position="360"/>
        <end position="389"/>
    </location>
</feature>
<feature type="modified residue" description="Phosphoserine" evidence="1">
    <location>
        <position position="314"/>
    </location>
</feature>
<feature type="modified residue" description="Phosphoserine" evidence="1">
    <location>
        <position position="324"/>
    </location>
</feature>
<feature type="modified residue" description="Phosphoserine" evidence="1">
    <location>
        <position position="326"/>
    </location>
</feature>
<feature type="modified residue" description="Phosphoserine" evidence="2">
    <location>
        <position position="410"/>
    </location>
</feature>
<accession>Q4R6Y7</accession>
<comment type="function">
    <text evidence="1">Required for cilia biogenesis. Appears to function within the multiple intraflagellar transport complex B (IFT-B). Key regulator of hedgehog signaling.</text>
</comment>
<comment type="subunit">
    <text evidence="2">Interacts with CLU/clusterin. Interacts with UBXN10; the interaction is direct.</text>
</comment>
<comment type="subcellular location">
    <subcellularLocation>
        <location evidence="2">Cell projection</location>
        <location evidence="2">Cilium</location>
    </subcellularLocation>
    <subcellularLocation>
        <location evidence="2">Nucleus</location>
    </subcellularLocation>
</comment>
<comment type="similarity">
    <text evidence="5">Belongs to the CLUAP1 family.</text>
</comment>
<sequence>MSFRDLRNFTEMMRALGYPRHISMENLRTPNFGLVSEVLLWLVKRYEPQTDIPPDVDTEQDRVFFIKAIAQFMATKAHIKLNTKKLYQADGYAVKELLKITSVLYNAMKTKGMEGSEIVEEDVNKFKFDLGSKIADLKAARQLASEITSKGASLYDLLGMEVELREMRTEAIARPLEINETEKVMRIAIKEILTQVQKTKDLLNNVASDEANLEAKIEKRKLELERNRKRLETLQSVRPCFMDEYEKTEEELQKQYDIYLEKFQNLTYLEQQLEEHHRMEQERFEEAKNTLCLIQNKLKEEEKRLLKSGSNDDSDVDIQEDDESDSELEERRLPKPRTAMEVLMQGRPGKRIVGTMQGGDSDDNEDSEESEIDMEDDDEDEDDDLEDESISLSPTKPNRRVRKPEPLDESDNDF</sequence>
<dbReference type="EMBL" id="AB169043">
    <property type="protein sequence ID" value="BAE01137.1"/>
    <property type="molecule type" value="mRNA"/>
</dbReference>
<dbReference type="RefSeq" id="NP_001272094.1">
    <property type="nucleotide sequence ID" value="NM_001285165.1"/>
</dbReference>
<dbReference type="SMR" id="Q4R6Y7"/>
<dbReference type="STRING" id="9541.ENSMFAP00000032267"/>
<dbReference type="eggNOG" id="KOG3647">
    <property type="taxonomic scope" value="Eukaryota"/>
</dbReference>
<dbReference type="Proteomes" id="UP000233100">
    <property type="component" value="Unplaced"/>
</dbReference>
<dbReference type="GO" id="GO:0005929">
    <property type="term" value="C:cilium"/>
    <property type="evidence" value="ECO:0007669"/>
    <property type="project" value="UniProtKB-SubCell"/>
</dbReference>
<dbReference type="GO" id="GO:0030992">
    <property type="term" value="C:intraciliary transport particle B"/>
    <property type="evidence" value="ECO:0007669"/>
    <property type="project" value="TreeGrafter"/>
</dbReference>
<dbReference type="GO" id="GO:0005815">
    <property type="term" value="C:microtubule organizing center"/>
    <property type="evidence" value="ECO:0007669"/>
    <property type="project" value="TreeGrafter"/>
</dbReference>
<dbReference type="GO" id="GO:0005634">
    <property type="term" value="C:nucleus"/>
    <property type="evidence" value="ECO:0007669"/>
    <property type="project" value="UniProtKB-SubCell"/>
</dbReference>
<dbReference type="GO" id="GO:0060271">
    <property type="term" value="P:cilium assembly"/>
    <property type="evidence" value="ECO:0007669"/>
    <property type="project" value="TreeGrafter"/>
</dbReference>
<dbReference type="InterPro" id="IPR019366">
    <property type="entry name" value="Clusterin-associated_protein-1"/>
</dbReference>
<dbReference type="PANTHER" id="PTHR21547">
    <property type="entry name" value="CLUSTERIN ASSOCIATED PROTEIN 1"/>
    <property type="match status" value="1"/>
</dbReference>
<dbReference type="PANTHER" id="PTHR21547:SF0">
    <property type="entry name" value="CLUSTERIN-ASSOCIATED PROTEIN 1"/>
    <property type="match status" value="1"/>
</dbReference>
<dbReference type="Pfam" id="PF10234">
    <property type="entry name" value="Cluap1"/>
    <property type="match status" value="1"/>
</dbReference>
<reference key="1">
    <citation type="submission" date="2004-03" db="EMBL/GenBank/DDBJ databases">
        <title>DNA sequences of macaque genes expressed in brain or testis and its evolutionary implications.</title>
        <authorList>
            <consortium name="International consortium for macaque cDNA sequencing and analysis"/>
        </authorList>
    </citation>
    <scope>NUCLEOTIDE SEQUENCE [LARGE SCALE MRNA]</scope>
    <source>
        <tissue>Testis</tissue>
    </source>
</reference>
<keyword id="KW-0966">Cell projection</keyword>
<keyword id="KW-0969">Cilium</keyword>
<keyword id="KW-0970">Cilium biogenesis/degradation</keyword>
<keyword id="KW-0175">Coiled coil</keyword>
<keyword id="KW-0539">Nucleus</keyword>
<keyword id="KW-0597">Phosphoprotein</keyword>
<keyword id="KW-1185">Reference proteome</keyword>